<evidence type="ECO:0000250" key="1">
    <source>
        <dbReference type="UniProtKB" id="P05719"/>
    </source>
</evidence>
<evidence type="ECO:0000303" key="2">
    <source>
    </source>
</evidence>
<evidence type="ECO:0000305" key="3"/>
<organism>
    <name type="scientific">Haemophilus influenzae (strain ATCC 51907 / DSM 11121 / KW20 / Rd)</name>
    <dbReference type="NCBI Taxonomy" id="71421"/>
    <lineage>
        <taxon>Bacteria</taxon>
        <taxon>Pseudomonadati</taxon>
        <taxon>Pseudomonadota</taxon>
        <taxon>Gammaproteobacteria</taxon>
        <taxon>Pasteurellales</taxon>
        <taxon>Pasteurellaceae</taxon>
        <taxon>Haemophilus</taxon>
    </lineage>
</organism>
<keyword id="KW-0238">DNA-binding</keyword>
<keyword id="KW-1185">Reference proteome</keyword>
<keyword id="KW-0677">Repeat</keyword>
<keyword id="KW-0680">Restriction system</keyword>
<comment type="function">
    <text evidence="2 3">A putative specificity subunit for a type I restriction enzyme; the corresponding endonuclease and methylase subunits have multiple frameshifts and are probably not expressed.</text>
</comment>
<comment type="domain">
    <text evidence="1">Contains two DNA recognition domains, each specifying recognition of one of the two defined components of the target sequence.</text>
</comment>
<comment type="similarity">
    <text evidence="3">Belongs to the type-I restriction system S methylase family.</text>
</comment>
<proteinExistence type="inferred from homology"/>
<protein>
    <recommendedName>
        <fullName evidence="2">Putative type I restriction enzyme specificity subunit S.HindORF215P</fullName>
        <shortName>S protein</shortName>
        <shortName evidence="2">S.HindORF215P</shortName>
    </recommendedName>
</protein>
<reference key="1">
    <citation type="journal article" date="1995" name="Science">
        <title>Whole-genome random sequencing and assembly of Haemophilus influenzae Rd.</title>
        <authorList>
            <person name="Fleischmann R.D."/>
            <person name="Adams M.D."/>
            <person name="White O."/>
            <person name="Clayton R.A."/>
            <person name="Kirkness E.F."/>
            <person name="Kerlavage A.R."/>
            <person name="Bult C.J."/>
            <person name="Tomb J.-F."/>
            <person name="Dougherty B.A."/>
            <person name="Merrick J.M."/>
            <person name="McKenney K."/>
            <person name="Sutton G.G."/>
            <person name="FitzHugh W."/>
            <person name="Fields C.A."/>
            <person name="Gocayne J.D."/>
            <person name="Scott J.D."/>
            <person name="Shirley R."/>
            <person name="Liu L.-I."/>
            <person name="Glodek A."/>
            <person name="Kelley J.M."/>
            <person name="Weidman J.F."/>
            <person name="Phillips C.A."/>
            <person name="Spriggs T."/>
            <person name="Hedblom E."/>
            <person name="Cotton M.D."/>
            <person name="Utterback T.R."/>
            <person name="Hanna M.C."/>
            <person name="Nguyen D.T."/>
            <person name="Saudek D.M."/>
            <person name="Brandon R.C."/>
            <person name="Fine L.D."/>
            <person name="Fritchman J.L."/>
            <person name="Fuhrmann J.L."/>
            <person name="Geoghagen N.S.M."/>
            <person name="Gnehm C.L."/>
            <person name="McDonald L.A."/>
            <person name="Small K.V."/>
            <person name="Fraser C.M."/>
            <person name="Smith H.O."/>
            <person name="Venter J.C."/>
        </authorList>
    </citation>
    <scope>NUCLEOTIDE SEQUENCE [LARGE SCALE GENOMIC DNA]</scope>
    <source>
        <strain>ATCC 51907 / DSM 11121 / KW20 / Rd</strain>
    </source>
</reference>
<reference key="2">
    <citation type="journal article" date="2003" name="Nucleic Acids Res.">
        <title>A nomenclature for restriction enzymes, DNA methyltransferases, homing endonucleases and their genes.</title>
        <authorList>
            <person name="Roberts R.J."/>
            <person name="Belfort M."/>
            <person name="Bestor T."/>
            <person name="Bhagwat A.S."/>
            <person name="Bickle T.A."/>
            <person name="Bitinaite J."/>
            <person name="Blumenthal R.M."/>
            <person name="Degtyarev S.K."/>
            <person name="Dryden D.T."/>
            <person name="Dybvig K."/>
            <person name="Firman K."/>
            <person name="Gromova E.S."/>
            <person name="Gumport R.I."/>
            <person name="Halford S.E."/>
            <person name="Hattman S."/>
            <person name="Heitman J."/>
            <person name="Hornby D.P."/>
            <person name="Janulaitis A."/>
            <person name="Jeltsch A."/>
            <person name="Josephsen J."/>
            <person name="Kiss A."/>
            <person name="Klaenhammer T.R."/>
            <person name="Kobayashi I."/>
            <person name="Kong H."/>
            <person name="Krueger D.H."/>
            <person name="Lacks S."/>
            <person name="Marinus M.G."/>
            <person name="Miyahara M."/>
            <person name="Morgan R.D."/>
            <person name="Murray N.E."/>
            <person name="Nagaraja V."/>
            <person name="Piekarowicz A."/>
            <person name="Pingoud A."/>
            <person name="Raleigh E."/>
            <person name="Rao D.N."/>
            <person name="Reich N."/>
            <person name="Repin V.E."/>
            <person name="Selker E.U."/>
            <person name="Shaw P.C."/>
            <person name="Stein D.C."/>
            <person name="Stoddard B.L."/>
            <person name="Szybalski W."/>
            <person name="Trautner T.A."/>
            <person name="Van Etten J.L."/>
            <person name="Vitor J.M."/>
            <person name="Wilson G.G."/>
            <person name="Xu S.Y."/>
        </authorList>
    </citation>
    <scope>NOMENCLATURE</scope>
</reference>
<accession>P71344</accession>
<sequence length="385" mass="44278">MKNNRTFLEKLLEGSEVEWKPLDEVANIVNNARKPVKSSLRVSGNIPYYGANNIQDYVEGYTHEGEFVLIAEDGSASLENYSIQWAVGKFWANNHVHVVNGKEKLNNRFLYHYLTNMNFIPFLAGKERAKLTKAKLQQIPIPIPPLSVQTEIVKILDALTALTSELTSELTSELTSELILRQKQYEYYREKLLNIDEMNKVIELGDVGPVRMCKRILKNQTASSGDIPFYKIGTFGKKPDAYISNELFQEYKQKYSYPKKGDILISASGTIGRTVIFDGENSYFQDSNIVWIDNDETLVLNKYLYHFYKIAKWGIAEGGTIQRLYNDNLKKVKISIPPLKEQHRIVSILDKFETLTNSITEGLPLAIEQSQKRYEYYRELLLNFS</sequence>
<dbReference type="EMBL" id="L42023">
    <property type="protein sequence ID" value="AAC21883.1"/>
    <property type="molecule type" value="Genomic_DNA"/>
</dbReference>
<dbReference type="PIR" id="E64055">
    <property type="entry name" value="E64055"/>
</dbReference>
<dbReference type="RefSeq" id="NP_438384.1">
    <property type="nucleotide sequence ID" value="NC_000907.1"/>
</dbReference>
<dbReference type="SMR" id="P71344"/>
<dbReference type="STRING" id="71421.HI_0216"/>
<dbReference type="REBASE" id="203442">
    <property type="entry name" value="S1.Lpl434ORF2272P"/>
</dbReference>
<dbReference type="REBASE" id="203808">
    <property type="entry name" value="S.Keu1446ORF916P"/>
</dbReference>
<dbReference type="REBASE" id="6051">
    <property type="entry name" value="S.HindORF215P"/>
</dbReference>
<dbReference type="EnsemblBacteria" id="AAC21883">
    <property type="protein sequence ID" value="AAC21883"/>
    <property type="gene ID" value="HI_0216"/>
</dbReference>
<dbReference type="KEGG" id="hin:HI_0216"/>
<dbReference type="PATRIC" id="fig|71421.8.peg.224"/>
<dbReference type="eggNOG" id="COG0732">
    <property type="taxonomic scope" value="Bacteria"/>
</dbReference>
<dbReference type="HOGENOM" id="CLU_021095_6_0_6"/>
<dbReference type="OrthoDB" id="9798929at2"/>
<dbReference type="PhylomeDB" id="P71344"/>
<dbReference type="BioCyc" id="HINF71421:G1GJ1-226-MONOMER"/>
<dbReference type="PRO" id="PR:P71344"/>
<dbReference type="Proteomes" id="UP000000579">
    <property type="component" value="Chromosome"/>
</dbReference>
<dbReference type="GO" id="GO:0003677">
    <property type="term" value="F:DNA binding"/>
    <property type="evidence" value="ECO:0007669"/>
    <property type="project" value="UniProtKB-KW"/>
</dbReference>
<dbReference type="GO" id="GO:0009307">
    <property type="term" value="P:DNA restriction-modification system"/>
    <property type="evidence" value="ECO:0007669"/>
    <property type="project" value="UniProtKB-KW"/>
</dbReference>
<dbReference type="CDD" id="cd17262">
    <property type="entry name" value="RMtype1_S_Aco12261I-TRD2-CR2"/>
    <property type="match status" value="1"/>
</dbReference>
<dbReference type="CDD" id="cd17292">
    <property type="entry name" value="RMtype1_S_LlaA17I_TRD2-CR2_like"/>
    <property type="match status" value="1"/>
</dbReference>
<dbReference type="Gene3D" id="3.90.220.20">
    <property type="entry name" value="DNA methylase specificity domains"/>
    <property type="match status" value="2"/>
</dbReference>
<dbReference type="InterPro" id="IPR000055">
    <property type="entry name" value="Restrct_endonuc_typeI_TRD"/>
</dbReference>
<dbReference type="InterPro" id="IPR044946">
    <property type="entry name" value="Restrct_endonuc_typeI_TRD_sf"/>
</dbReference>
<dbReference type="InterPro" id="IPR051212">
    <property type="entry name" value="Type-I_RE_S_subunit"/>
</dbReference>
<dbReference type="PANTHER" id="PTHR43140:SF1">
    <property type="entry name" value="TYPE I RESTRICTION ENZYME ECOKI SPECIFICITY SUBUNIT"/>
    <property type="match status" value="1"/>
</dbReference>
<dbReference type="PANTHER" id="PTHR43140">
    <property type="entry name" value="TYPE-1 RESTRICTION ENZYME ECOKI SPECIFICITY PROTEIN"/>
    <property type="match status" value="1"/>
</dbReference>
<dbReference type="Pfam" id="PF01420">
    <property type="entry name" value="Methylase_S"/>
    <property type="match status" value="2"/>
</dbReference>
<dbReference type="SUPFAM" id="SSF116734">
    <property type="entry name" value="DNA methylase specificity domain"/>
    <property type="match status" value="2"/>
</dbReference>
<name>T1SI_HAEIN</name>
<feature type="chain" id="PRO_0000198041" description="Putative type I restriction enzyme specificity subunit S.HindORF215P">
    <location>
        <begin position="1"/>
        <end position="385"/>
    </location>
</feature>
<gene>
    <name type="ordered locus">HI_0216</name>
</gene>